<name>KKCC2_RAT</name>
<protein>
    <recommendedName>
        <fullName>Calcium/calmodulin-dependent protein kinase kinase 2</fullName>
        <shortName>CaM-KK 2</shortName>
        <shortName>CaM-kinase kinase 2</shortName>
        <shortName>CaMKK 2</shortName>
        <ecNumber>2.7.11.17</ecNumber>
    </recommendedName>
    <alternativeName>
        <fullName>Calcium/calmodulin-dependent protein kinase kinase beta</fullName>
        <shortName>CaM-KK beta</shortName>
        <shortName>CaM-kinase kinase beta</shortName>
        <shortName>CaMKK beta</shortName>
    </alternativeName>
</protein>
<feature type="initiator methionine" description="Removed" evidence="3">
    <location>
        <position position="1"/>
    </location>
</feature>
<feature type="chain" id="PRO_0000086146" description="Calcium/calmodulin-dependent protein kinase kinase 2">
    <location>
        <begin position="2"/>
        <end position="587"/>
    </location>
</feature>
<feature type="domain" description="Protein kinase" evidence="4">
    <location>
        <begin position="164"/>
        <end position="445"/>
    </location>
</feature>
<feature type="region of interest" description="Disordered" evidence="6">
    <location>
        <begin position="1"/>
        <end position="32"/>
    </location>
</feature>
<feature type="region of interest" description="Disordered" evidence="6">
    <location>
        <begin position="74"/>
        <end position="115"/>
    </location>
</feature>
<feature type="region of interest" description="RP domain">
    <location>
        <begin position="203"/>
        <end position="225"/>
    </location>
</feature>
<feature type="region of interest" description="Disordered" evidence="6">
    <location>
        <begin position="204"/>
        <end position="224"/>
    </location>
</feature>
<feature type="region of interest" description="Autoinhibitory domain" evidence="1">
    <location>
        <begin position="471"/>
        <end position="476"/>
    </location>
</feature>
<feature type="region of interest" description="Calmodulin-binding" evidence="1">
    <location>
        <begin position="474"/>
        <end position="499"/>
    </location>
</feature>
<feature type="region of interest" description="Disordered" evidence="6">
    <location>
        <begin position="496"/>
        <end position="587"/>
    </location>
</feature>
<feature type="compositionally biased region" description="Polar residues" evidence="6">
    <location>
        <begin position="1"/>
        <end position="11"/>
    </location>
</feature>
<feature type="compositionally biased region" description="Polar residues" evidence="6">
    <location>
        <begin position="101"/>
        <end position="115"/>
    </location>
</feature>
<feature type="compositionally biased region" description="Basic and acidic residues" evidence="6">
    <location>
        <begin position="520"/>
        <end position="535"/>
    </location>
</feature>
<feature type="compositionally biased region" description="Pro residues" evidence="6">
    <location>
        <begin position="569"/>
        <end position="579"/>
    </location>
</feature>
<feature type="active site" description="Proton acceptor" evidence="4 5">
    <location>
        <position position="311"/>
    </location>
</feature>
<feature type="binding site" evidence="4">
    <location>
        <begin position="170"/>
        <end position="178"/>
    </location>
    <ligand>
        <name>ATP</name>
        <dbReference type="ChEBI" id="CHEBI:30616"/>
    </ligand>
</feature>
<feature type="binding site" evidence="4">
    <location>
        <position position="193"/>
    </location>
    <ligand>
        <name>ATP</name>
        <dbReference type="ChEBI" id="CHEBI:30616"/>
    </ligand>
</feature>
<feature type="modified residue" description="N-acetylserine" evidence="3">
    <location>
        <position position="2"/>
    </location>
</feature>
<feature type="modified residue" description="Phosphoserine" evidence="2">
    <location>
        <position position="99"/>
    </location>
</feature>
<feature type="modified residue" description="Phosphoserine" evidence="3">
    <location>
        <position position="113"/>
    </location>
</feature>
<feature type="modified residue" description="Phosphoserine" evidence="3">
    <location>
        <position position="128"/>
    </location>
</feature>
<feature type="modified residue" description="Phosphoserine" evidence="2">
    <location>
        <position position="132"/>
    </location>
</feature>
<feature type="modified residue" description="Phosphoserine" evidence="2">
    <location>
        <position position="136"/>
    </location>
</feature>
<feature type="modified residue" description="Phosphoserine" evidence="12">
    <location>
        <position position="494"/>
    </location>
</feature>
<feature type="modified residue" description="Phosphoserine" evidence="12">
    <location>
        <position position="510"/>
    </location>
</feature>
<feature type="modified residue" description="Phosphoserine" evidence="2">
    <location>
        <position position="571"/>
    </location>
</feature>
<feature type="splice variant" id="VSP_046047" description="In isoform 2." evidence="11">
    <original>KPTREWEPLSEPKEARQRRQPPGPRASPCGGGGSALVKGGPCVESCGAPAPGSPPRTPPQQPEEAMEPE</original>
    <variation>QGSEDSLRGPEPAPVGEEEVLL</variation>
    <location>
        <begin position="519"/>
        <end position="587"/>
    </location>
</feature>
<feature type="sequence conflict" description="In Ref. 2; AA sequence." evidence="11" ref="2">
    <original>L</original>
    <variation>S</variation>
    <location>
        <position position="180"/>
    </location>
</feature>
<feature type="sequence conflict" description="In Ref. 2; AA sequence." evidence="11" ref="2">
    <original>P</original>
    <variation>V</variation>
    <location>
        <position position="245"/>
    </location>
</feature>
<feature type="sequence conflict" description="In Ref. 2; AA sequence." evidence="11" ref="2">
    <location>
        <position position="300"/>
    </location>
</feature>
<feature type="sequence conflict" description="In Ref. 2; AA sequence." evidence="11" ref="2">
    <original>V</original>
    <variation>S</variation>
    <location>
        <position position="465"/>
    </location>
</feature>
<feature type="sequence conflict" description="In Ref. 2; AA sequence." evidence="11" ref="2">
    <original>E</original>
    <variation>T</variation>
    <location>
        <position position="468"/>
    </location>
</feature>
<accession>O88831</accession>
<proteinExistence type="evidence at protein level"/>
<dbReference type="EC" id="2.7.11.17"/>
<dbReference type="EMBL" id="AB018081">
    <property type="protein sequence ID" value="BAA33524.1"/>
    <property type="molecule type" value="mRNA"/>
</dbReference>
<dbReference type="PIR" id="JC5669">
    <property type="entry name" value="JC5669"/>
</dbReference>
<dbReference type="RefSeq" id="NP_112628.1">
    <property type="nucleotide sequence ID" value="NM_031338.1"/>
</dbReference>
<dbReference type="SMR" id="O88831"/>
<dbReference type="BioGRID" id="249725">
    <property type="interactions" value="7"/>
</dbReference>
<dbReference type="FunCoup" id="O88831">
    <property type="interactions" value="2190"/>
</dbReference>
<dbReference type="STRING" id="10116.ENSRNOP00000001774"/>
<dbReference type="ChEMBL" id="CHEMBL1795115"/>
<dbReference type="iPTMnet" id="O88831"/>
<dbReference type="PhosphoSitePlus" id="O88831"/>
<dbReference type="SwissPalm" id="O88831"/>
<dbReference type="PaxDb" id="10116-ENSRNOP00000001774"/>
<dbReference type="GeneID" id="83506"/>
<dbReference type="KEGG" id="rno:83506"/>
<dbReference type="UCSC" id="RGD:620092">
    <molecule id="O88831-1"/>
    <property type="organism name" value="rat"/>
</dbReference>
<dbReference type="AGR" id="RGD:620092"/>
<dbReference type="CTD" id="10645"/>
<dbReference type="RGD" id="620092">
    <property type="gene designation" value="Camkk2"/>
</dbReference>
<dbReference type="eggNOG" id="KOG0585">
    <property type="taxonomic scope" value="Eukaryota"/>
</dbReference>
<dbReference type="InParanoid" id="O88831"/>
<dbReference type="PhylomeDB" id="O88831"/>
<dbReference type="Reactome" id="R-RNO-111932">
    <property type="pathway name" value="CaMK IV-mediated phosphorylation of CREB"/>
</dbReference>
<dbReference type="Reactome" id="R-RNO-442729">
    <property type="pathway name" value="CREB1 phosphorylation through the activation of CaMKII/CaMKK/CaMKIV cascasde"/>
</dbReference>
<dbReference type="Reactome" id="R-RNO-9619229">
    <property type="pathway name" value="Activation of RAC1 downstream of NMDARs"/>
</dbReference>
<dbReference type="PRO" id="PR:O88831"/>
<dbReference type="Proteomes" id="UP000002494">
    <property type="component" value="Unplaced"/>
</dbReference>
<dbReference type="GO" id="GO:0005829">
    <property type="term" value="C:cytosol"/>
    <property type="evidence" value="ECO:0000266"/>
    <property type="project" value="RGD"/>
</dbReference>
<dbReference type="GO" id="GO:0043005">
    <property type="term" value="C:neuron projection"/>
    <property type="evidence" value="ECO:0007669"/>
    <property type="project" value="UniProtKB-SubCell"/>
</dbReference>
<dbReference type="GO" id="GO:0005654">
    <property type="term" value="C:nucleoplasm"/>
    <property type="evidence" value="ECO:0000304"/>
    <property type="project" value="Reactome"/>
</dbReference>
<dbReference type="GO" id="GO:0005524">
    <property type="term" value="F:ATP binding"/>
    <property type="evidence" value="ECO:0007669"/>
    <property type="project" value="UniProtKB-KW"/>
</dbReference>
<dbReference type="GO" id="GO:0005509">
    <property type="term" value="F:calcium ion binding"/>
    <property type="evidence" value="ECO:0000250"/>
    <property type="project" value="UniProtKB"/>
</dbReference>
<dbReference type="GO" id="GO:0004683">
    <property type="term" value="F:calcium/calmodulin-dependent protein kinase activity"/>
    <property type="evidence" value="ECO:0000314"/>
    <property type="project" value="RGD"/>
</dbReference>
<dbReference type="GO" id="GO:0005516">
    <property type="term" value="F:calmodulin binding"/>
    <property type="evidence" value="ECO:0000314"/>
    <property type="project" value="RGD"/>
</dbReference>
<dbReference type="GO" id="GO:0030295">
    <property type="term" value="F:protein kinase activator activity"/>
    <property type="evidence" value="ECO:0000304"/>
    <property type="project" value="RGD"/>
</dbReference>
<dbReference type="GO" id="GO:0004672">
    <property type="term" value="F:protein kinase activity"/>
    <property type="evidence" value="ECO:0000304"/>
    <property type="project" value="RGD"/>
</dbReference>
<dbReference type="GO" id="GO:0106310">
    <property type="term" value="F:protein serine kinase activity"/>
    <property type="evidence" value="ECO:0007669"/>
    <property type="project" value="RHEA"/>
</dbReference>
<dbReference type="GO" id="GO:0004674">
    <property type="term" value="F:protein serine/threonine kinase activity"/>
    <property type="evidence" value="ECO:0000318"/>
    <property type="project" value="GO_Central"/>
</dbReference>
<dbReference type="GO" id="GO:0061762">
    <property type="term" value="P:CAMKK-AMPK signaling cascade"/>
    <property type="evidence" value="ECO:0000266"/>
    <property type="project" value="RGD"/>
</dbReference>
<dbReference type="GO" id="GO:0046777">
    <property type="term" value="P:protein autophosphorylation"/>
    <property type="evidence" value="ECO:0000250"/>
    <property type="project" value="UniProtKB"/>
</dbReference>
<dbReference type="GO" id="GO:0006468">
    <property type="term" value="P:protein phosphorylation"/>
    <property type="evidence" value="ECO:0000250"/>
    <property type="project" value="UniProtKB"/>
</dbReference>
<dbReference type="CDD" id="cd14199">
    <property type="entry name" value="STKc_CaMKK2"/>
    <property type="match status" value="1"/>
</dbReference>
<dbReference type="FunFam" id="3.30.200.20:FF:000429">
    <property type="entry name" value="Calcium/calmodulin-dependent protein kinase kinase"/>
    <property type="match status" value="1"/>
</dbReference>
<dbReference type="FunFam" id="1.10.510.10:FF:000091">
    <property type="entry name" value="Calcium/calmodulin-dependent protein kinase kinase 2 isoform 1"/>
    <property type="match status" value="1"/>
</dbReference>
<dbReference type="Gene3D" id="3.30.200.20">
    <property type="entry name" value="Phosphorylase Kinase, domain 1"/>
    <property type="match status" value="1"/>
</dbReference>
<dbReference type="Gene3D" id="1.10.510.10">
    <property type="entry name" value="Transferase(Phosphotransferase) domain 1"/>
    <property type="match status" value="1"/>
</dbReference>
<dbReference type="InterPro" id="IPR011009">
    <property type="entry name" value="Kinase-like_dom_sf"/>
</dbReference>
<dbReference type="InterPro" id="IPR000719">
    <property type="entry name" value="Prot_kinase_dom"/>
</dbReference>
<dbReference type="InterPro" id="IPR017441">
    <property type="entry name" value="Protein_kinase_ATP_BS"/>
</dbReference>
<dbReference type="InterPro" id="IPR008271">
    <property type="entry name" value="Ser/Thr_kinase_AS"/>
</dbReference>
<dbReference type="PANTHER" id="PTHR43895">
    <property type="entry name" value="CALCIUM/CALMODULIN-DEPENDENT PROTEIN KINASE KINASE-RELATED"/>
    <property type="match status" value="1"/>
</dbReference>
<dbReference type="PANTHER" id="PTHR43895:SF39">
    <property type="entry name" value="CALCIUM_CALMODULIN-DEPENDENT PROTEIN KINASE KINASE 2"/>
    <property type="match status" value="1"/>
</dbReference>
<dbReference type="Pfam" id="PF00069">
    <property type="entry name" value="Pkinase"/>
    <property type="match status" value="1"/>
</dbReference>
<dbReference type="SMART" id="SM00220">
    <property type="entry name" value="S_TKc"/>
    <property type="match status" value="1"/>
</dbReference>
<dbReference type="SUPFAM" id="SSF56112">
    <property type="entry name" value="Protein kinase-like (PK-like)"/>
    <property type="match status" value="1"/>
</dbReference>
<dbReference type="PROSITE" id="PS00107">
    <property type="entry name" value="PROTEIN_KINASE_ATP"/>
    <property type="match status" value="1"/>
</dbReference>
<dbReference type="PROSITE" id="PS50011">
    <property type="entry name" value="PROTEIN_KINASE_DOM"/>
    <property type="match status" value="1"/>
</dbReference>
<dbReference type="PROSITE" id="PS00108">
    <property type="entry name" value="PROTEIN_KINASE_ST"/>
    <property type="match status" value="1"/>
</dbReference>
<gene>
    <name type="primary">Camkk2</name>
</gene>
<keyword id="KW-0007">Acetylation</keyword>
<keyword id="KW-0025">Alternative splicing</keyword>
<keyword id="KW-0067">ATP-binding</keyword>
<keyword id="KW-0112">Calmodulin-binding</keyword>
<keyword id="KW-0966">Cell projection</keyword>
<keyword id="KW-0963">Cytoplasm</keyword>
<keyword id="KW-0903">Direct protein sequencing</keyword>
<keyword id="KW-0418">Kinase</keyword>
<keyword id="KW-0547">Nucleotide-binding</keyword>
<keyword id="KW-0539">Nucleus</keyword>
<keyword id="KW-0597">Phosphoprotein</keyword>
<keyword id="KW-1185">Reference proteome</keyword>
<keyword id="KW-0723">Serine/threonine-protein kinase</keyword>
<keyword id="KW-0808">Transferase</keyword>
<sequence length="587" mass="64446">MSSCVSSQPTSDRAAPQDELGSGGVSRESQKPCEALRGLSSLSIHLGMESFIVVTECEPGRGVDLSLARDQPLEADGQELPLDASEPESRSLLSGGKMSLQERSQGGPASSSSLDMNGRCICPSLSYSPASSPQSSPRMPRRPTVESHHVSITGLQDCVQLNQYTLKDEIGKGSYGVVKLAYNENDNTYYAMKVLSKKKLIRQAGFPRRPPPRGTRPAPGGCIQPRGPIEQVYQEIAILKKLDHPNVVKLVEVLDDPNEDHLYMVFELVNQGPVMEVPTLKPLSEDQARFYFQDLIKGIEYLHYQKIIHRDIKPSNLLVGEDGHIKIADFGVSNEFKGSDALLSNTVGTPAFMAPESLSETRKIFSGKALDVWAMGVTLYCFVFGQCPFMDERIMCLHSKIKSQALEFPDQPDIAEDLKDLITRMLDKNPESRIVVPEIKLHPWVTRHGAEPLPSEDENCTLVEVTEEEVENSVKHIPSLATVILVKTMIRKRSFGNPFEGSRREERSLSAPGNLLTKKPTREWEPLSEPKEARQRRQPPGPRASPCGGGGSALVKGGPCVESCGAPAPGSPPRTPPQQPEEAMEPE</sequence>
<comment type="function">
    <text evidence="1 7 8 9 10">Calcium/calmodulin-dependent protein kinase belonging to a proposed calcium-triggered signaling cascade involved in a number of cellular processes. Phosphorylates CAMK1 and CAMK4. Phosphorylates CAMK1D (By similarity). Seems to be involved in hippocampal activation of CREB1 (By similarity). Efficiently phosphorylates 5'-AMP-activated protein kinase (AMPK) trimer, including that consisting of PRKAA1, PRKAB1 and PRKAG1. This phosphorylation is stimulated in response to Ca(2+) signals. May play a role in neurite growth. Isoform 2 may promote neurite elongation, while isoform 1 may promoter neurite branching.</text>
</comment>
<comment type="catalytic activity">
    <reaction>
        <text>L-seryl-[protein] + ATP = O-phospho-L-seryl-[protein] + ADP + H(+)</text>
        <dbReference type="Rhea" id="RHEA:17989"/>
        <dbReference type="Rhea" id="RHEA-COMP:9863"/>
        <dbReference type="Rhea" id="RHEA-COMP:11604"/>
        <dbReference type="ChEBI" id="CHEBI:15378"/>
        <dbReference type="ChEBI" id="CHEBI:29999"/>
        <dbReference type="ChEBI" id="CHEBI:30616"/>
        <dbReference type="ChEBI" id="CHEBI:83421"/>
        <dbReference type="ChEBI" id="CHEBI:456216"/>
        <dbReference type="EC" id="2.7.11.17"/>
    </reaction>
</comment>
<comment type="catalytic activity">
    <reaction>
        <text>L-threonyl-[protein] + ATP = O-phospho-L-threonyl-[protein] + ADP + H(+)</text>
        <dbReference type="Rhea" id="RHEA:46608"/>
        <dbReference type="Rhea" id="RHEA-COMP:11060"/>
        <dbReference type="Rhea" id="RHEA-COMP:11605"/>
        <dbReference type="ChEBI" id="CHEBI:15378"/>
        <dbReference type="ChEBI" id="CHEBI:30013"/>
        <dbReference type="ChEBI" id="CHEBI:30616"/>
        <dbReference type="ChEBI" id="CHEBI:61977"/>
        <dbReference type="ChEBI" id="CHEBI:456216"/>
        <dbReference type="EC" id="2.7.11.17"/>
    </reaction>
</comment>
<comment type="activity regulation">
    <text>Activated by Ca(2+)/calmodulin. Binding of calmodulin may relieve intrasteric autoinhibition. Autophosphorylation does not alter activity or regulation by Ca(2+)/calmodulin. In part, activity is independent on Ca(2+)/calmodulin.</text>
</comment>
<comment type="subunit">
    <text evidence="10">Interacts with calmodulin.</text>
</comment>
<comment type="subcellular location">
    <subcellularLocation>
        <location evidence="3">Nucleus</location>
    </subcellularLocation>
    <subcellularLocation>
        <location evidence="3">Cytoplasm</location>
    </subcellularLocation>
    <subcellularLocation>
        <location evidence="3">Cell projection</location>
        <location evidence="3">Neuron projection</location>
    </subcellularLocation>
    <text evidence="3">Predominantly nuclear in unstimulated cells, relocalizes into cytoplasm and neurites after forskolin induction.</text>
</comment>
<comment type="alternative products">
    <event type="alternative splicing"/>
    <isoform>
        <id>O88831-1</id>
        <name>1</name>
        <name>CAMKK2+E16</name>
        <sequence type="displayed"/>
    </isoform>
    <isoform>
        <id>O88831-2</id>
        <name>2</name>
        <name>CAMKK2-E16</name>
        <sequence type="described" ref="VSP_046047"/>
    </isoform>
</comment>
<comment type="tissue specificity">
    <text evidence="8">Mainly expressed in brain, but detected in all tissues tested (at protein level). In the brain, isoform 1 may be predominant. with high levels in the cerebellum and hippocampus, although isoform 3 is detectable. Isoform 3 is also expressed in lung.</text>
</comment>
<comment type="domain">
    <text>The autoinhibitory domain overlaps with the calmodulin binding region and may be involved in intrasteric autoinhibition.</text>
</comment>
<comment type="domain">
    <text evidence="1">The RP domain (arginine/proline-rich) is involved in the recognition of CAMKI and CAMK4 as substrates.</text>
</comment>
<comment type="PTM">
    <text evidence="1">Phosphorylated by PKA (By similarity). Each isoform may show a different pattern of phosphorylation (By similarity). Autophosphorylated.</text>
</comment>
<comment type="similarity">
    <text evidence="4">Belongs to the protein kinase superfamily. Ser/Thr protein kinase family.</text>
</comment>
<organism>
    <name type="scientific">Rattus norvegicus</name>
    <name type="common">Rat</name>
    <dbReference type="NCBI Taxonomy" id="10116"/>
    <lineage>
        <taxon>Eukaryota</taxon>
        <taxon>Metazoa</taxon>
        <taxon>Chordata</taxon>
        <taxon>Craniata</taxon>
        <taxon>Vertebrata</taxon>
        <taxon>Euteleostomi</taxon>
        <taxon>Mammalia</taxon>
        <taxon>Eutheria</taxon>
        <taxon>Euarchontoglires</taxon>
        <taxon>Glires</taxon>
        <taxon>Rodentia</taxon>
        <taxon>Myomorpha</taxon>
        <taxon>Muroidea</taxon>
        <taxon>Muridae</taxon>
        <taxon>Murinae</taxon>
        <taxon>Rattus</taxon>
    </lineage>
</organism>
<evidence type="ECO:0000250" key="1"/>
<evidence type="ECO:0000250" key="2">
    <source>
        <dbReference type="UniProtKB" id="Q8C078"/>
    </source>
</evidence>
<evidence type="ECO:0000250" key="3">
    <source>
        <dbReference type="UniProtKB" id="Q96RR4"/>
    </source>
</evidence>
<evidence type="ECO:0000255" key="4">
    <source>
        <dbReference type="PROSITE-ProRule" id="PRU00159"/>
    </source>
</evidence>
<evidence type="ECO:0000255" key="5">
    <source>
        <dbReference type="PROSITE-ProRule" id="PRU10027"/>
    </source>
</evidence>
<evidence type="ECO:0000256" key="6">
    <source>
        <dbReference type="SAM" id="MobiDB-lite"/>
    </source>
</evidence>
<evidence type="ECO:0000269" key="7">
    <source>
    </source>
</evidence>
<evidence type="ECO:0000269" key="8">
    <source>
    </source>
</evidence>
<evidence type="ECO:0000269" key="9">
    <source>
    </source>
</evidence>
<evidence type="ECO:0000269" key="10">
    <source>
    </source>
</evidence>
<evidence type="ECO:0000305" key="11"/>
<evidence type="ECO:0007744" key="12">
    <source>
    </source>
</evidence>
<reference key="1">
    <citation type="journal article" date="1997" name="J. Biochem.">
        <title>Molecular cloning of Ca2+/calmodulin-dependent protein kinase kinase beta.</title>
        <authorList>
            <person name="Kitani T."/>
            <person name="Okuno S."/>
            <person name="Fujisawa H."/>
        </authorList>
    </citation>
    <scope>NUCLEOTIDE SEQUENCE [MRNA] (ISOFORM 1)</scope>
    <source>
        <tissue>Cerebellum</tissue>
    </source>
</reference>
<reference key="2">
    <citation type="journal article" date="1996" name="J. Biol. Chem.">
        <title>Multiple Ca(2+)-calmodulin-dependent protein kinase kinases from rat brain. Purification, regulation by Ca(2+)-calmodulin, and partial amino acid sequence.</title>
        <authorList>
            <person name="Edelman A.M."/>
            <person name="Mitchelhill K.I."/>
            <person name="Selbert M.A."/>
            <person name="Anderson K.A."/>
            <person name="Hook S.S."/>
            <person name="Stapleton D."/>
            <person name="Goldstein E.G."/>
            <person name="Means A.R."/>
            <person name="Kemp B.E."/>
        </authorList>
    </citation>
    <scope>PROTEIN SEQUENCE OF 180-184; 227-280; 290-294; 298-306; 327-335; 338-355; 403-418; 425-429; 434-445; 448-469 AND 494-503</scope>
    <scope>FUNCTION IN PHOSPHORYLATION OF CAMK1 AND CAMK4</scope>
</reference>
<reference key="3">
    <citation type="journal article" date="1998" name="J. Biol. Chem.">
        <title>Components of a calmodulin-dependent protein kinase cascade. Molecular cloning, functional characterization and cellular localization of Ca2+/calmodulin-dependent protein kinase kinase beta.</title>
        <authorList>
            <person name="Anderson K.A."/>
            <person name="Means R.L."/>
            <person name="Huang Q.-H."/>
            <person name="Kemp B.E."/>
            <person name="Goldstein E.G."/>
            <person name="Selbert M.A."/>
            <person name="Edelman A.M."/>
            <person name="Fremeau R.T."/>
            <person name="Means A.R."/>
        </authorList>
    </citation>
    <scope>CHARACTERIZATION</scope>
    <scope>INTERACTION WITH CALMODULIN</scope>
    <scope>FUNCTION IN PHOSPHORYLATION OF CAMK1 AND CAMK4</scope>
    <scope>AUTOPHOSPHORYLATION</scope>
</reference>
<reference key="4">
    <citation type="journal article" date="2000" name="Eur. J. Neurosci.">
        <title>Distinct immunohistochemical localization of two isoforms of Ca2+/calmodulin-dependent protein kinase kinases in the adult rat brain.</title>
        <authorList>
            <person name="Sakagami H."/>
            <person name="Umemiya M."/>
            <person name="Saito S."/>
            <person name="Kondo H."/>
        </authorList>
    </citation>
    <scope>SUBCELLULAR LOCATION</scope>
</reference>
<reference key="5">
    <citation type="journal article" date="2001" name="Annu. Rev. Pharmacol. Toxicol.">
        <title>Ca(2+)/CaM-dependent kinases: from activation to function.</title>
        <authorList>
            <person name="Hook S.S."/>
            <person name="Means A.R."/>
        </authorList>
    </citation>
    <scope>SUBCELLULAR LOCATION</scope>
</reference>
<reference key="6">
    <citation type="journal article" date="2011" name="Cell. Signal.">
        <title>Characterization of the CaMKKbeta-AMPK signaling complex.</title>
        <authorList>
            <person name="Green M.F."/>
            <person name="Anderson K.A."/>
            <person name="Means A.R."/>
        </authorList>
    </citation>
    <scope>FUNCTION</scope>
    <scope>SUBCELLULAR LOCATION</scope>
</reference>
<reference key="7">
    <citation type="journal article" date="2011" name="RNA Biol.">
        <title>Differential effects of PKA-controlled CaMKK2 variants on neuronal differentiation.</title>
        <authorList>
            <person name="Cao W."/>
            <person name="Sohail M."/>
            <person name="Liu G."/>
            <person name="Koumbadinga G.A."/>
            <person name="Lobo V.G."/>
            <person name="Xie J."/>
        </authorList>
    </citation>
    <scope>FUNCTION</scope>
    <scope>TISSUE SPECIFICITY</scope>
    <scope>IDENTIFICATION OF ISOFORM 2</scope>
</reference>
<reference key="8">
    <citation type="journal article" date="2012" name="Nat. Commun.">
        <title>Quantitative maps of protein phosphorylation sites across 14 different rat organs and tissues.</title>
        <authorList>
            <person name="Lundby A."/>
            <person name="Secher A."/>
            <person name="Lage K."/>
            <person name="Nordsborg N.B."/>
            <person name="Dmytriyev A."/>
            <person name="Lundby C."/>
            <person name="Olsen J.V."/>
        </authorList>
    </citation>
    <scope>PHOSPHORYLATION [LARGE SCALE ANALYSIS] AT SER-494 AND SER-510</scope>
    <scope>IDENTIFICATION BY MASS SPECTROMETRY [LARGE SCALE ANALYSIS]</scope>
</reference>